<proteinExistence type="inferred from homology"/>
<evidence type="ECO:0000255" key="1">
    <source>
        <dbReference type="HAMAP-Rule" id="MF_00225"/>
    </source>
</evidence>
<comment type="function">
    <text evidence="1">Catalyzes the conversion of dihydroorotate to orotate with quinone as electron acceptor.</text>
</comment>
<comment type="catalytic activity">
    <reaction evidence="1">
        <text>(S)-dihydroorotate + a quinone = orotate + a quinol</text>
        <dbReference type="Rhea" id="RHEA:30187"/>
        <dbReference type="ChEBI" id="CHEBI:24646"/>
        <dbReference type="ChEBI" id="CHEBI:30839"/>
        <dbReference type="ChEBI" id="CHEBI:30864"/>
        <dbReference type="ChEBI" id="CHEBI:132124"/>
        <dbReference type="EC" id="1.3.5.2"/>
    </reaction>
</comment>
<comment type="cofactor">
    <cofactor evidence="1">
        <name>FMN</name>
        <dbReference type="ChEBI" id="CHEBI:58210"/>
    </cofactor>
    <text evidence="1">Binds 1 FMN per subunit.</text>
</comment>
<comment type="pathway">
    <text evidence="1">Pyrimidine metabolism; UMP biosynthesis via de novo pathway; orotate from (S)-dihydroorotate (quinone route): step 1/1.</text>
</comment>
<comment type="subunit">
    <text evidence="1">Monomer.</text>
</comment>
<comment type="subcellular location">
    <subcellularLocation>
        <location evidence="1">Cell membrane</location>
        <topology evidence="1">Peripheral membrane protein</topology>
    </subcellularLocation>
</comment>
<comment type="similarity">
    <text evidence="1">Belongs to the dihydroorotate dehydrogenase family. Type 2 subfamily.</text>
</comment>
<organism>
    <name type="scientific">Escherichia coli O45:K1 (strain S88 / ExPEC)</name>
    <dbReference type="NCBI Taxonomy" id="585035"/>
    <lineage>
        <taxon>Bacteria</taxon>
        <taxon>Pseudomonadati</taxon>
        <taxon>Pseudomonadota</taxon>
        <taxon>Gammaproteobacteria</taxon>
        <taxon>Enterobacterales</taxon>
        <taxon>Enterobacteriaceae</taxon>
        <taxon>Escherichia</taxon>
    </lineage>
</organism>
<name>PYRD_ECO45</name>
<reference key="1">
    <citation type="journal article" date="2009" name="PLoS Genet.">
        <title>Organised genome dynamics in the Escherichia coli species results in highly diverse adaptive paths.</title>
        <authorList>
            <person name="Touchon M."/>
            <person name="Hoede C."/>
            <person name="Tenaillon O."/>
            <person name="Barbe V."/>
            <person name="Baeriswyl S."/>
            <person name="Bidet P."/>
            <person name="Bingen E."/>
            <person name="Bonacorsi S."/>
            <person name="Bouchier C."/>
            <person name="Bouvet O."/>
            <person name="Calteau A."/>
            <person name="Chiapello H."/>
            <person name="Clermont O."/>
            <person name="Cruveiller S."/>
            <person name="Danchin A."/>
            <person name="Diard M."/>
            <person name="Dossat C."/>
            <person name="Karoui M.E."/>
            <person name="Frapy E."/>
            <person name="Garry L."/>
            <person name="Ghigo J.M."/>
            <person name="Gilles A.M."/>
            <person name="Johnson J."/>
            <person name="Le Bouguenec C."/>
            <person name="Lescat M."/>
            <person name="Mangenot S."/>
            <person name="Martinez-Jehanne V."/>
            <person name="Matic I."/>
            <person name="Nassif X."/>
            <person name="Oztas S."/>
            <person name="Petit M.A."/>
            <person name="Pichon C."/>
            <person name="Rouy Z."/>
            <person name="Ruf C.S."/>
            <person name="Schneider D."/>
            <person name="Tourret J."/>
            <person name="Vacherie B."/>
            <person name="Vallenet D."/>
            <person name="Medigue C."/>
            <person name="Rocha E.P.C."/>
            <person name="Denamur E."/>
        </authorList>
    </citation>
    <scope>NUCLEOTIDE SEQUENCE [LARGE SCALE GENOMIC DNA]</scope>
    <source>
        <strain>S88 / ExPEC</strain>
    </source>
</reference>
<sequence length="336" mass="36818">MYYPFVRKALFQLDPERAHEFTFQQLRRITGTPFEALVRQKVPAKPVNCMGLTFKNPLGLAAGLDKDGECIDALGAMGFGSIEIGTVTPRPQPGNDKPRLFRLVDAEGLINRMGFNNLGVDNLVENVKKAHYDGVLGINIGKNKDTPVEQGKDDYLICMEKIYAYAGYIAINISSPNTPGLRTLQYGEALDDLLTAIKNKQNDLQVMHHKYVPIAVKIAPDLSEEELIQVADSLVRHNIDGVIATNTTLDRSLVQGMKNCDQTGGLSGRPLQLKSTEIIRRLSQELNGRLPIIGVGGIDSVIAAREKIAAGASLVQIYSGFIFKGPPLIKEIVTHI</sequence>
<accession>B7MHP7</accession>
<gene>
    <name evidence="1" type="primary">pyrD</name>
    <name type="ordered locus">ECS88_0966</name>
</gene>
<dbReference type="EC" id="1.3.5.2" evidence="1"/>
<dbReference type="EMBL" id="CU928161">
    <property type="protein sequence ID" value="CAR02298.1"/>
    <property type="molecule type" value="Genomic_DNA"/>
</dbReference>
<dbReference type="RefSeq" id="WP_001295934.1">
    <property type="nucleotide sequence ID" value="NC_011742.1"/>
</dbReference>
<dbReference type="SMR" id="B7MHP7"/>
<dbReference type="KEGG" id="ecz:ECS88_0966"/>
<dbReference type="HOGENOM" id="CLU_013640_2_0_6"/>
<dbReference type="UniPathway" id="UPA00070">
    <property type="reaction ID" value="UER00946"/>
</dbReference>
<dbReference type="Proteomes" id="UP000000747">
    <property type="component" value="Chromosome"/>
</dbReference>
<dbReference type="GO" id="GO:0005737">
    <property type="term" value="C:cytoplasm"/>
    <property type="evidence" value="ECO:0007669"/>
    <property type="project" value="InterPro"/>
</dbReference>
<dbReference type="GO" id="GO:0005886">
    <property type="term" value="C:plasma membrane"/>
    <property type="evidence" value="ECO:0007669"/>
    <property type="project" value="UniProtKB-SubCell"/>
</dbReference>
<dbReference type="GO" id="GO:0106430">
    <property type="term" value="F:dihydroorotate dehydrogenase (quinone) activity"/>
    <property type="evidence" value="ECO:0007669"/>
    <property type="project" value="UniProtKB-EC"/>
</dbReference>
<dbReference type="GO" id="GO:0006207">
    <property type="term" value="P:'de novo' pyrimidine nucleobase biosynthetic process"/>
    <property type="evidence" value="ECO:0007669"/>
    <property type="project" value="InterPro"/>
</dbReference>
<dbReference type="GO" id="GO:0044205">
    <property type="term" value="P:'de novo' UMP biosynthetic process"/>
    <property type="evidence" value="ECO:0007669"/>
    <property type="project" value="UniProtKB-UniRule"/>
</dbReference>
<dbReference type="CDD" id="cd04738">
    <property type="entry name" value="DHOD_2_like"/>
    <property type="match status" value="1"/>
</dbReference>
<dbReference type="FunFam" id="3.20.20.70:FF:000028">
    <property type="entry name" value="Dihydroorotate dehydrogenase (quinone)"/>
    <property type="match status" value="1"/>
</dbReference>
<dbReference type="Gene3D" id="3.20.20.70">
    <property type="entry name" value="Aldolase class I"/>
    <property type="match status" value="1"/>
</dbReference>
<dbReference type="HAMAP" id="MF_00225">
    <property type="entry name" value="DHO_dh_type2"/>
    <property type="match status" value="1"/>
</dbReference>
<dbReference type="InterPro" id="IPR013785">
    <property type="entry name" value="Aldolase_TIM"/>
</dbReference>
<dbReference type="InterPro" id="IPR050074">
    <property type="entry name" value="DHO_dehydrogenase"/>
</dbReference>
<dbReference type="InterPro" id="IPR012135">
    <property type="entry name" value="Dihydroorotate_DH_1_2"/>
</dbReference>
<dbReference type="InterPro" id="IPR005719">
    <property type="entry name" value="Dihydroorotate_DH_2"/>
</dbReference>
<dbReference type="InterPro" id="IPR005720">
    <property type="entry name" value="Dihydroorotate_DH_cat"/>
</dbReference>
<dbReference type="InterPro" id="IPR001295">
    <property type="entry name" value="Dihydroorotate_DH_CS"/>
</dbReference>
<dbReference type="NCBIfam" id="NF003644">
    <property type="entry name" value="PRK05286.1-1"/>
    <property type="match status" value="1"/>
</dbReference>
<dbReference type="NCBIfam" id="NF003645">
    <property type="entry name" value="PRK05286.1-2"/>
    <property type="match status" value="1"/>
</dbReference>
<dbReference type="NCBIfam" id="NF003646">
    <property type="entry name" value="PRK05286.1-4"/>
    <property type="match status" value="1"/>
</dbReference>
<dbReference type="NCBIfam" id="NF003652">
    <property type="entry name" value="PRK05286.2-5"/>
    <property type="match status" value="1"/>
</dbReference>
<dbReference type="NCBIfam" id="TIGR01036">
    <property type="entry name" value="pyrD_sub2"/>
    <property type="match status" value="1"/>
</dbReference>
<dbReference type="PANTHER" id="PTHR48109:SF4">
    <property type="entry name" value="DIHYDROOROTATE DEHYDROGENASE (QUINONE), MITOCHONDRIAL"/>
    <property type="match status" value="1"/>
</dbReference>
<dbReference type="PANTHER" id="PTHR48109">
    <property type="entry name" value="DIHYDROOROTATE DEHYDROGENASE (QUINONE), MITOCHONDRIAL-RELATED"/>
    <property type="match status" value="1"/>
</dbReference>
<dbReference type="Pfam" id="PF01180">
    <property type="entry name" value="DHO_dh"/>
    <property type="match status" value="1"/>
</dbReference>
<dbReference type="PIRSF" id="PIRSF000164">
    <property type="entry name" value="DHO_oxidase"/>
    <property type="match status" value="1"/>
</dbReference>
<dbReference type="SUPFAM" id="SSF51395">
    <property type="entry name" value="FMN-linked oxidoreductases"/>
    <property type="match status" value="1"/>
</dbReference>
<dbReference type="PROSITE" id="PS00911">
    <property type="entry name" value="DHODEHASE_1"/>
    <property type="match status" value="1"/>
</dbReference>
<dbReference type="PROSITE" id="PS00912">
    <property type="entry name" value="DHODEHASE_2"/>
    <property type="match status" value="1"/>
</dbReference>
<feature type="chain" id="PRO_1000195073" description="Dihydroorotate dehydrogenase (quinone)">
    <location>
        <begin position="1"/>
        <end position="336"/>
    </location>
</feature>
<feature type="active site" description="Nucleophile" evidence="1">
    <location>
        <position position="175"/>
    </location>
</feature>
<feature type="binding site" evidence="1">
    <location>
        <begin position="62"/>
        <end position="66"/>
    </location>
    <ligand>
        <name>FMN</name>
        <dbReference type="ChEBI" id="CHEBI:58210"/>
    </ligand>
</feature>
<feature type="binding site" evidence="1">
    <location>
        <position position="66"/>
    </location>
    <ligand>
        <name>substrate</name>
    </ligand>
</feature>
<feature type="binding site" evidence="1">
    <location>
        <position position="86"/>
    </location>
    <ligand>
        <name>FMN</name>
        <dbReference type="ChEBI" id="CHEBI:58210"/>
    </ligand>
</feature>
<feature type="binding site" evidence="1">
    <location>
        <begin position="111"/>
        <end position="115"/>
    </location>
    <ligand>
        <name>substrate</name>
    </ligand>
</feature>
<feature type="binding site" evidence="1">
    <location>
        <position position="139"/>
    </location>
    <ligand>
        <name>FMN</name>
        <dbReference type="ChEBI" id="CHEBI:58210"/>
    </ligand>
</feature>
<feature type="binding site" evidence="1">
    <location>
        <position position="172"/>
    </location>
    <ligand>
        <name>FMN</name>
        <dbReference type="ChEBI" id="CHEBI:58210"/>
    </ligand>
</feature>
<feature type="binding site" evidence="1">
    <location>
        <position position="172"/>
    </location>
    <ligand>
        <name>substrate</name>
    </ligand>
</feature>
<feature type="binding site" evidence="1">
    <location>
        <position position="177"/>
    </location>
    <ligand>
        <name>substrate</name>
    </ligand>
</feature>
<feature type="binding site" evidence="1">
    <location>
        <position position="217"/>
    </location>
    <ligand>
        <name>FMN</name>
        <dbReference type="ChEBI" id="CHEBI:58210"/>
    </ligand>
</feature>
<feature type="binding site" evidence="1">
    <location>
        <position position="245"/>
    </location>
    <ligand>
        <name>FMN</name>
        <dbReference type="ChEBI" id="CHEBI:58210"/>
    </ligand>
</feature>
<feature type="binding site" evidence="1">
    <location>
        <begin position="246"/>
        <end position="247"/>
    </location>
    <ligand>
        <name>substrate</name>
    </ligand>
</feature>
<feature type="binding site" evidence="1">
    <location>
        <position position="268"/>
    </location>
    <ligand>
        <name>FMN</name>
        <dbReference type="ChEBI" id="CHEBI:58210"/>
    </ligand>
</feature>
<feature type="binding site" evidence="1">
    <location>
        <position position="297"/>
    </location>
    <ligand>
        <name>FMN</name>
        <dbReference type="ChEBI" id="CHEBI:58210"/>
    </ligand>
</feature>
<feature type="binding site" evidence="1">
    <location>
        <begin position="318"/>
        <end position="319"/>
    </location>
    <ligand>
        <name>FMN</name>
        <dbReference type="ChEBI" id="CHEBI:58210"/>
    </ligand>
</feature>
<keyword id="KW-1003">Cell membrane</keyword>
<keyword id="KW-0285">Flavoprotein</keyword>
<keyword id="KW-0288">FMN</keyword>
<keyword id="KW-0472">Membrane</keyword>
<keyword id="KW-0560">Oxidoreductase</keyword>
<keyword id="KW-0665">Pyrimidine biosynthesis</keyword>
<keyword id="KW-1185">Reference proteome</keyword>
<protein>
    <recommendedName>
        <fullName evidence="1">Dihydroorotate dehydrogenase (quinone)</fullName>
        <ecNumber evidence="1">1.3.5.2</ecNumber>
    </recommendedName>
    <alternativeName>
        <fullName evidence="1">DHOdehase</fullName>
        <shortName evidence="1">DHOD</shortName>
        <shortName evidence="1">DHODase</shortName>
    </alternativeName>
    <alternativeName>
        <fullName evidence="1">Dihydroorotate oxidase</fullName>
    </alternativeName>
</protein>